<dbReference type="EMBL" id="CP000301">
    <property type="protein sequence ID" value="ABD85901.1"/>
    <property type="molecule type" value="Genomic_DNA"/>
</dbReference>
<dbReference type="SMR" id="Q21CI5"/>
<dbReference type="STRING" id="316056.RPC_0326"/>
<dbReference type="KEGG" id="rpc:RPC_0326"/>
<dbReference type="eggNOG" id="COG1420">
    <property type="taxonomic scope" value="Bacteria"/>
</dbReference>
<dbReference type="HOGENOM" id="CLU_050019_0_0_5"/>
<dbReference type="OrthoDB" id="9783139at2"/>
<dbReference type="GO" id="GO:0003677">
    <property type="term" value="F:DNA binding"/>
    <property type="evidence" value="ECO:0007669"/>
    <property type="project" value="InterPro"/>
</dbReference>
<dbReference type="GO" id="GO:0045892">
    <property type="term" value="P:negative regulation of DNA-templated transcription"/>
    <property type="evidence" value="ECO:0007669"/>
    <property type="project" value="UniProtKB-UniRule"/>
</dbReference>
<dbReference type="Gene3D" id="3.30.450.40">
    <property type="match status" value="1"/>
</dbReference>
<dbReference type="Gene3D" id="3.30.390.60">
    <property type="entry name" value="Heat-inducible transcription repressor hrca homolog, domain 3"/>
    <property type="match status" value="1"/>
</dbReference>
<dbReference type="Gene3D" id="1.10.10.10">
    <property type="entry name" value="Winged helix-like DNA-binding domain superfamily/Winged helix DNA-binding domain"/>
    <property type="match status" value="1"/>
</dbReference>
<dbReference type="HAMAP" id="MF_00081">
    <property type="entry name" value="HrcA"/>
    <property type="match status" value="1"/>
</dbReference>
<dbReference type="InterPro" id="IPR029016">
    <property type="entry name" value="GAF-like_dom_sf"/>
</dbReference>
<dbReference type="InterPro" id="IPR002571">
    <property type="entry name" value="HrcA"/>
</dbReference>
<dbReference type="InterPro" id="IPR021153">
    <property type="entry name" value="HrcA_C"/>
</dbReference>
<dbReference type="InterPro" id="IPR036388">
    <property type="entry name" value="WH-like_DNA-bd_sf"/>
</dbReference>
<dbReference type="InterPro" id="IPR036390">
    <property type="entry name" value="WH_DNA-bd_sf"/>
</dbReference>
<dbReference type="InterPro" id="IPR023120">
    <property type="entry name" value="WHTH_transcript_rep_HrcA_IDD"/>
</dbReference>
<dbReference type="NCBIfam" id="TIGR00331">
    <property type="entry name" value="hrcA"/>
    <property type="match status" value="1"/>
</dbReference>
<dbReference type="PANTHER" id="PTHR34824">
    <property type="entry name" value="HEAT-INDUCIBLE TRANSCRIPTION REPRESSOR HRCA"/>
    <property type="match status" value="1"/>
</dbReference>
<dbReference type="PANTHER" id="PTHR34824:SF1">
    <property type="entry name" value="HEAT-INDUCIBLE TRANSCRIPTION REPRESSOR HRCA"/>
    <property type="match status" value="1"/>
</dbReference>
<dbReference type="Pfam" id="PF01628">
    <property type="entry name" value="HrcA"/>
    <property type="match status" value="1"/>
</dbReference>
<dbReference type="PIRSF" id="PIRSF005485">
    <property type="entry name" value="HrcA"/>
    <property type="match status" value="1"/>
</dbReference>
<dbReference type="SUPFAM" id="SSF55781">
    <property type="entry name" value="GAF domain-like"/>
    <property type="match status" value="1"/>
</dbReference>
<dbReference type="SUPFAM" id="SSF46785">
    <property type="entry name" value="Winged helix' DNA-binding domain"/>
    <property type="match status" value="1"/>
</dbReference>
<accession>Q21CI5</accession>
<sequence>MAHHDPIGLIAPNAGLAQLNERSREIFRQIVESYLATGEPVGSRNISRLITVPLSPASVRNVMSDLEQLGLIYAPHTSAGRLPTELGLRFFVDALMQVGDLTEPERQSIQAQLASVGRAQSVEAALGEALTRLSGLTRAAAVVLTAKSNARLKHIEFVRLEPERALVVLVSEDGQVENRVLTLAAGVPSSALIEASNFLNARIRGRTLAEARLELETALSQDRAELDQLTQKVISAGIASWSGGANDDRQLIVRGHANLLEDLHALDDLERVRLLFDDLETKRGVIDLLGRAESAEGVRIFIGSENKLFSLSGSSTIIAPYSDGAGHIVGVLGVIGPTRLNYARVIPMVDYAARVVSQMLGG</sequence>
<feature type="chain" id="PRO_1000010444" description="Heat-inducible transcription repressor HrcA">
    <location>
        <begin position="1"/>
        <end position="362"/>
    </location>
</feature>
<name>HRCA_RHOPB</name>
<protein>
    <recommendedName>
        <fullName evidence="1">Heat-inducible transcription repressor HrcA</fullName>
    </recommendedName>
</protein>
<comment type="function">
    <text evidence="1">Negative regulator of class I heat shock genes (grpE-dnaK-dnaJ and groELS operons). Prevents heat-shock induction of these operons.</text>
</comment>
<comment type="similarity">
    <text evidence="1">Belongs to the HrcA family.</text>
</comment>
<proteinExistence type="inferred from homology"/>
<organism>
    <name type="scientific">Rhodopseudomonas palustris (strain BisB18)</name>
    <dbReference type="NCBI Taxonomy" id="316056"/>
    <lineage>
        <taxon>Bacteria</taxon>
        <taxon>Pseudomonadati</taxon>
        <taxon>Pseudomonadota</taxon>
        <taxon>Alphaproteobacteria</taxon>
        <taxon>Hyphomicrobiales</taxon>
        <taxon>Nitrobacteraceae</taxon>
        <taxon>Rhodopseudomonas</taxon>
    </lineage>
</organism>
<gene>
    <name evidence="1" type="primary">hrcA</name>
    <name type="ordered locus">RPC_0326</name>
</gene>
<keyword id="KW-0678">Repressor</keyword>
<keyword id="KW-0346">Stress response</keyword>
<keyword id="KW-0804">Transcription</keyword>
<keyword id="KW-0805">Transcription regulation</keyword>
<evidence type="ECO:0000255" key="1">
    <source>
        <dbReference type="HAMAP-Rule" id="MF_00081"/>
    </source>
</evidence>
<reference key="1">
    <citation type="submission" date="2006-03" db="EMBL/GenBank/DDBJ databases">
        <title>Complete sequence of Rhodopseudomonas palustris BisB18.</title>
        <authorList>
            <consortium name="US DOE Joint Genome Institute"/>
            <person name="Copeland A."/>
            <person name="Lucas S."/>
            <person name="Lapidus A."/>
            <person name="Barry K."/>
            <person name="Detter J.C."/>
            <person name="Glavina del Rio T."/>
            <person name="Hammon N."/>
            <person name="Israni S."/>
            <person name="Dalin E."/>
            <person name="Tice H."/>
            <person name="Pitluck S."/>
            <person name="Chain P."/>
            <person name="Malfatti S."/>
            <person name="Shin M."/>
            <person name="Vergez L."/>
            <person name="Schmutz J."/>
            <person name="Larimer F."/>
            <person name="Land M."/>
            <person name="Hauser L."/>
            <person name="Pelletier D.A."/>
            <person name="Kyrpides N."/>
            <person name="Anderson I."/>
            <person name="Oda Y."/>
            <person name="Harwood C.S."/>
            <person name="Richardson P."/>
        </authorList>
    </citation>
    <scope>NUCLEOTIDE SEQUENCE [LARGE SCALE GENOMIC DNA]</scope>
    <source>
        <strain>BisB18</strain>
    </source>
</reference>